<keyword id="KW-0963">Cytoplasm</keyword>
<keyword id="KW-0489">Methyltransferase</keyword>
<keyword id="KW-0694">RNA-binding</keyword>
<keyword id="KW-0698">rRNA processing</keyword>
<keyword id="KW-0949">S-adenosyl-L-methionine</keyword>
<keyword id="KW-0808">Transferase</keyword>
<protein>
    <recommendedName>
        <fullName evidence="1">Ribosomal RNA small subunit methyltransferase B</fullName>
        <ecNumber evidence="1">2.1.1.176</ecNumber>
    </recommendedName>
    <alternativeName>
        <fullName evidence="1">16S rRNA m5C967 methyltransferase</fullName>
    </alternativeName>
    <alternativeName>
        <fullName evidence="1">rRNA (cytosine-C(5)-)-methyltransferase RsmB</fullName>
    </alternativeName>
</protein>
<evidence type="ECO:0000255" key="1">
    <source>
        <dbReference type="HAMAP-Rule" id="MF_01856"/>
    </source>
</evidence>
<sequence length="429" mass="48506">MKSSYNLRSIAAKVVGQVLDQGQSLSALLPVHQREVSEKDRALLQELCFGVLRVLPQLEWCIQQLMAKPLTGKQRTLHYLIMVGIYQLHYTRIPPHAALAETVEGAVALKRPQLKGLINGVLRQFQRQQEELIQREANHSSHYLHPSWLLARIEHAYPNHWQTIVEANNQRPPMWLRVNRLHHTREAYLNLLAQEGIEAFPHTEFTDAIRLASPCAVDQLPGFSQGWATVQDASAQGCVYWLDPQDGEQILDLCAAPGGKTTHILEAAPQSHVLAVDIDETRLGRVKENLLRLQMHAEVKQGDGRYPDSWCEGRMFDRILLDAPCSATGVIRRHPDIKWLRRDRDIEELVALQKEIFDAIWPHLKVGGTMVYATCSILPQENAQQVTDFLTRHADATLVDTGTRELPGIQMLPHADGGDGFFYAKLVKN</sequence>
<feature type="chain" id="PRO_1000216153" description="Ribosomal RNA small subunit methyltransferase B">
    <location>
        <begin position="1"/>
        <end position="429"/>
    </location>
</feature>
<feature type="active site" description="Nucleophile" evidence="1">
    <location>
        <position position="375"/>
    </location>
</feature>
<feature type="binding site" evidence="1">
    <location>
        <begin position="254"/>
        <end position="260"/>
    </location>
    <ligand>
        <name>S-adenosyl-L-methionine</name>
        <dbReference type="ChEBI" id="CHEBI:59789"/>
    </ligand>
</feature>
<feature type="binding site" evidence="1">
    <location>
        <position position="277"/>
    </location>
    <ligand>
        <name>S-adenosyl-L-methionine</name>
        <dbReference type="ChEBI" id="CHEBI:59789"/>
    </ligand>
</feature>
<feature type="binding site" evidence="1">
    <location>
        <position position="303"/>
    </location>
    <ligand>
        <name>S-adenosyl-L-methionine</name>
        <dbReference type="ChEBI" id="CHEBI:59789"/>
    </ligand>
</feature>
<feature type="binding site" evidence="1">
    <location>
        <position position="322"/>
    </location>
    <ligand>
        <name>S-adenosyl-L-methionine</name>
        <dbReference type="ChEBI" id="CHEBI:59789"/>
    </ligand>
</feature>
<gene>
    <name evidence="1" type="primary">rsmB</name>
    <name evidence="1" type="synonym">sun</name>
    <name type="ordered locus">PC1_3791</name>
</gene>
<name>RSMB_PECCP</name>
<accession>C6DFR7</accession>
<dbReference type="EC" id="2.1.1.176" evidence="1"/>
<dbReference type="EMBL" id="CP001657">
    <property type="protein sequence ID" value="ACT14806.1"/>
    <property type="molecule type" value="Genomic_DNA"/>
</dbReference>
<dbReference type="RefSeq" id="WP_015841917.1">
    <property type="nucleotide sequence ID" value="NC_012917.1"/>
</dbReference>
<dbReference type="SMR" id="C6DFR7"/>
<dbReference type="STRING" id="561230.PC1_3791"/>
<dbReference type="GeneID" id="67792312"/>
<dbReference type="KEGG" id="pct:PC1_3791"/>
<dbReference type="eggNOG" id="COG0144">
    <property type="taxonomic scope" value="Bacteria"/>
</dbReference>
<dbReference type="eggNOG" id="COG0781">
    <property type="taxonomic scope" value="Bacteria"/>
</dbReference>
<dbReference type="HOGENOM" id="CLU_005316_0_4_6"/>
<dbReference type="OrthoDB" id="9810297at2"/>
<dbReference type="Proteomes" id="UP000002736">
    <property type="component" value="Chromosome"/>
</dbReference>
<dbReference type="GO" id="GO:0005829">
    <property type="term" value="C:cytosol"/>
    <property type="evidence" value="ECO:0007669"/>
    <property type="project" value="TreeGrafter"/>
</dbReference>
<dbReference type="GO" id="GO:0003723">
    <property type="term" value="F:RNA binding"/>
    <property type="evidence" value="ECO:0007669"/>
    <property type="project" value="UniProtKB-KW"/>
</dbReference>
<dbReference type="GO" id="GO:0009383">
    <property type="term" value="F:rRNA (cytosine-C5-)-methyltransferase activity"/>
    <property type="evidence" value="ECO:0007669"/>
    <property type="project" value="TreeGrafter"/>
</dbReference>
<dbReference type="GO" id="GO:0006355">
    <property type="term" value="P:regulation of DNA-templated transcription"/>
    <property type="evidence" value="ECO:0007669"/>
    <property type="project" value="InterPro"/>
</dbReference>
<dbReference type="GO" id="GO:0070475">
    <property type="term" value="P:rRNA base methylation"/>
    <property type="evidence" value="ECO:0007669"/>
    <property type="project" value="TreeGrafter"/>
</dbReference>
<dbReference type="CDD" id="cd02440">
    <property type="entry name" value="AdoMet_MTases"/>
    <property type="match status" value="1"/>
</dbReference>
<dbReference type="CDD" id="cd00620">
    <property type="entry name" value="Methyltransferase_Sun"/>
    <property type="match status" value="1"/>
</dbReference>
<dbReference type="FunFam" id="1.10.940.10:FF:000002">
    <property type="entry name" value="Ribosomal RNA small subunit methyltransferase B"/>
    <property type="match status" value="1"/>
</dbReference>
<dbReference type="FunFam" id="3.30.70.1170:FF:000002">
    <property type="entry name" value="Ribosomal RNA small subunit methyltransferase B"/>
    <property type="match status" value="1"/>
</dbReference>
<dbReference type="FunFam" id="3.40.50.150:FF:000022">
    <property type="entry name" value="Ribosomal RNA small subunit methyltransferase B"/>
    <property type="match status" value="1"/>
</dbReference>
<dbReference type="Gene3D" id="1.10.287.730">
    <property type="entry name" value="Helix hairpin bin"/>
    <property type="match status" value="1"/>
</dbReference>
<dbReference type="Gene3D" id="1.10.940.10">
    <property type="entry name" value="NusB-like"/>
    <property type="match status" value="1"/>
</dbReference>
<dbReference type="Gene3D" id="3.30.70.1170">
    <property type="entry name" value="Sun protein, domain 3"/>
    <property type="match status" value="1"/>
</dbReference>
<dbReference type="Gene3D" id="3.40.50.150">
    <property type="entry name" value="Vaccinia Virus protein VP39"/>
    <property type="match status" value="1"/>
</dbReference>
<dbReference type="HAMAP" id="MF_01856">
    <property type="entry name" value="16SrRNA_methyltr_B"/>
    <property type="match status" value="1"/>
</dbReference>
<dbReference type="InterPro" id="IPR049560">
    <property type="entry name" value="MeTrfase_RsmB-F_NOP2_cat"/>
</dbReference>
<dbReference type="InterPro" id="IPR001678">
    <property type="entry name" value="MeTrfase_RsmB-F_NOP2_dom"/>
</dbReference>
<dbReference type="InterPro" id="IPR035926">
    <property type="entry name" value="NusB-like_sf"/>
</dbReference>
<dbReference type="InterPro" id="IPR006027">
    <property type="entry name" value="NusB_RsmB_TIM44"/>
</dbReference>
<dbReference type="InterPro" id="IPR023267">
    <property type="entry name" value="RCMT"/>
</dbReference>
<dbReference type="InterPro" id="IPR004573">
    <property type="entry name" value="rRNA_ssu_MeTfrase_B"/>
</dbReference>
<dbReference type="InterPro" id="IPR023541">
    <property type="entry name" value="rRNA_ssu_MeTfrase_B_ent"/>
</dbReference>
<dbReference type="InterPro" id="IPR054728">
    <property type="entry name" value="RsmB-like_ferredoxin"/>
</dbReference>
<dbReference type="InterPro" id="IPR048019">
    <property type="entry name" value="RsmB-like_N"/>
</dbReference>
<dbReference type="InterPro" id="IPR018314">
    <property type="entry name" value="RsmB/NOL1/NOP2-like_CS"/>
</dbReference>
<dbReference type="InterPro" id="IPR029063">
    <property type="entry name" value="SAM-dependent_MTases_sf"/>
</dbReference>
<dbReference type="NCBIfam" id="NF008149">
    <property type="entry name" value="PRK10901.1"/>
    <property type="match status" value="1"/>
</dbReference>
<dbReference type="NCBIfam" id="NF011494">
    <property type="entry name" value="PRK14902.1"/>
    <property type="match status" value="1"/>
</dbReference>
<dbReference type="NCBIfam" id="TIGR00563">
    <property type="entry name" value="rsmB"/>
    <property type="match status" value="1"/>
</dbReference>
<dbReference type="PANTHER" id="PTHR22807:SF61">
    <property type="entry name" value="NOL1_NOP2_SUN FAMILY PROTEIN _ ANTITERMINATION NUSB DOMAIN-CONTAINING PROTEIN"/>
    <property type="match status" value="1"/>
</dbReference>
<dbReference type="PANTHER" id="PTHR22807">
    <property type="entry name" value="NOP2 YEAST -RELATED NOL1/NOP2/FMU SUN DOMAIN-CONTAINING"/>
    <property type="match status" value="1"/>
</dbReference>
<dbReference type="Pfam" id="PF01189">
    <property type="entry name" value="Methyltr_RsmB-F"/>
    <property type="match status" value="1"/>
</dbReference>
<dbReference type="Pfam" id="PF01029">
    <property type="entry name" value="NusB"/>
    <property type="match status" value="1"/>
</dbReference>
<dbReference type="Pfam" id="PF22458">
    <property type="entry name" value="RsmF-B_ferredox"/>
    <property type="match status" value="1"/>
</dbReference>
<dbReference type="PRINTS" id="PR02008">
    <property type="entry name" value="RCMTFAMILY"/>
</dbReference>
<dbReference type="SUPFAM" id="SSF48013">
    <property type="entry name" value="NusB-like"/>
    <property type="match status" value="1"/>
</dbReference>
<dbReference type="SUPFAM" id="SSF53335">
    <property type="entry name" value="S-adenosyl-L-methionine-dependent methyltransferases"/>
    <property type="match status" value="1"/>
</dbReference>
<dbReference type="PROSITE" id="PS01153">
    <property type="entry name" value="NOL1_NOP2_SUN"/>
    <property type="match status" value="1"/>
</dbReference>
<dbReference type="PROSITE" id="PS51686">
    <property type="entry name" value="SAM_MT_RSMB_NOP"/>
    <property type="match status" value="1"/>
</dbReference>
<comment type="function">
    <text evidence="1">Specifically methylates the cytosine at position 967 (m5C967) of 16S rRNA.</text>
</comment>
<comment type="catalytic activity">
    <reaction evidence="1">
        <text>cytidine(967) in 16S rRNA + S-adenosyl-L-methionine = 5-methylcytidine(967) in 16S rRNA + S-adenosyl-L-homocysteine + H(+)</text>
        <dbReference type="Rhea" id="RHEA:42748"/>
        <dbReference type="Rhea" id="RHEA-COMP:10219"/>
        <dbReference type="Rhea" id="RHEA-COMP:10220"/>
        <dbReference type="ChEBI" id="CHEBI:15378"/>
        <dbReference type="ChEBI" id="CHEBI:57856"/>
        <dbReference type="ChEBI" id="CHEBI:59789"/>
        <dbReference type="ChEBI" id="CHEBI:74483"/>
        <dbReference type="ChEBI" id="CHEBI:82748"/>
        <dbReference type="EC" id="2.1.1.176"/>
    </reaction>
</comment>
<comment type="subcellular location">
    <subcellularLocation>
        <location evidence="1">Cytoplasm</location>
    </subcellularLocation>
</comment>
<comment type="similarity">
    <text evidence="1">Belongs to the class I-like SAM-binding methyltransferase superfamily. RsmB/NOP family.</text>
</comment>
<proteinExistence type="inferred from homology"/>
<reference key="1">
    <citation type="submission" date="2009-07" db="EMBL/GenBank/DDBJ databases">
        <title>Complete sequence of Pectobacterium carotovorum subsp. carotovorum PC1.</title>
        <authorList>
            <consortium name="US DOE Joint Genome Institute"/>
            <person name="Lucas S."/>
            <person name="Copeland A."/>
            <person name="Lapidus A."/>
            <person name="Glavina del Rio T."/>
            <person name="Tice H."/>
            <person name="Bruce D."/>
            <person name="Goodwin L."/>
            <person name="Pitluck S."/>
            <person name="Munk A.C."/>
            <person name="Brettin T."/>
            <person name="Detter J.C."/>
            <person name="Han C."/>
            <person name="Tapia R."/>
            <person name="Larimer F."/>
            <person name="Land M."/>
            <person name="Hauser L."/>
            <person name="Kyrpides N."/>
            <person name="Mikhailova N."/>
            <person name="Balakrishnan V."/>
            <person name="Glasner J."/>
            <person name="Perna N.T."/>
        </authorList>
    </citation>
    <scope>NUCLEOTIDE SEQUENCE [LARGE SCALE GENOMIC DNA]</scope>
    <source>
        <strain>PC1</strain>
    </source>
</reference>
<organism>
    <name type="scientific">Pectobacterium carotovorum subsp. carotovorum (strain PC1)</name>
    <dbReference type="NCBI Taxonomy" id="561230"/>
    <lineage>
        <taxon>Bacteria</taxon>
        <taxon>Pseudomonadati</taxon>
        <taxon>Pseudomonadota</taxon>
        <taxon>Gammaproteobacteria</taxon>
        <taxon>Enterobacterales</taxon>
        <taxon>Pectobacteriaceae</taxon>
        <taxon>Pectobacterium</taxon>
    </lineage>
</organism>